<sequence length="508" mass="58592">MKNTYYITTPIYYVNDVAHIGHAYTSVASDVIARFMRFCGKDVMFLTGTDEHGQKVEKAAINQNIDPQTFTDKTSQNFRDLMVAMNISNDDFIRTTENRHKKAVAVFWKKLLDNGAIYEGFYEGWYSVRDEAFYDESEINEDKLAPTGAPVEWVKEPSYFFNLAKWQDKLLEFYELNPDFVRPISRRNEVISFIKSGLKDLSISRTTFHWGIKVPNNRKHVIYVWLDALVNYISALGYPDKQSNYAKFWPANLQIVGKDILRFHAVYWPAFLMAAEIPLPKAIMVHGWWTNEGQKISKSLGNTIDPITLIDEFGVDQVRYFLMREVIFGADANFARNNLITRINSELSNKIGNLLHRIVSFVYKNNDAKVPLIKSGVIDKIYELPILKTAIKFAQENILLMDKTEINKILENIINLAEDANIYITNEAPWNLKTTDPDKMLEVLYSLLEVLRYIAIMLQPFVPNSANKMLDQLGVSKEERLFKHLVRDHALKAGSNILEPSIIFPKFN</sequence>
<name>SYM_RICPR</name>
<reference key="1">
    <citation type="journal article" date="1998" name="Nature">
        <title>The genome sequence of Rickettsia prowazekii and the origin of mitochondria.</title>
        <authorList>
            <person name="Andersson S.G.E."/>
            <person name="Zomorodipour A."/>
            <person name="Andersson J.O."/>
            <person name="Sicheritz-Ponten T."/>
            <person name="Alsmark U.C.M."/>
            <person name="Podowski R.M."/>
            <person name="Naeslund A.K."/>
            <person name="Eriksson A.-S."/>
            <person name="Winkler H.H."/>
            <person name="Kurland C.G."/>
        </authorList>
    </citation>
    <scope>NUCLEOTIDE SEQUENCE [LARGE SCALE GENOMIC DNA]</scope>
    <source>
        <strain>Madrid E</strain>
    </source>
</reference>
<gene>
    <name type="primary">metG</name>
    <name type="synonym">metS</name>
    <name type="ordered locus">RP683</name>
</gene>
<evidence type="ECO:0000250" key="1"/>
<evidence type="ECO:0000305" key="2"/>
<protein>
    <recommendedName>
        <fullName>Methionine--tRNA ligase</fullName>
        <ecNumber>6.1.1.10</ecNumber>
    </recommendedName>
    <alternativeName>
        <fullName>Methionyl-tRNA synthetase</fullName>
        <shortName>MetRS</shortName>
    </alternativeName>
</protein>
<proteinExistence type="inferred from homology"/>
<organism>
    <name type="scientific">Rickettsia prowazekii (strain Madrid E)</name>
    <dbReference type="NCBI Taxonomy" id="272947"/>
    <lineage>
        <taxon>Bacteria</taxon>
        <taxon>Pseudomonadati</taxon>
        <taxon>Pseudomonadota</taxon>
        <taxon>Alphaproteobacteria</taxon>
        <taxon>Rickettsiales</taxon>
        <taxon>Rickettsiaceae</taxon>
        <taxon>Rickettsieae</taxon>
        <taxon>Rickettsia</taxon>
        <taxon>typhus group</taxon>
    </lineage>
</organism>
<feature type="chain" id="PRO_0000139238" description="Methionine--tRNA ligase">
    <location>
        <begin position="1"/>
        <end position="508"/>
    </location>
</feature>
<feature type="short sequence motif" description="'HIGH' region">
    <location>
        <begin position="12"/>
        <end position="22"/>
    </location>
</feature>
<feature type="short sequence motif" description="'KMSKS' region">
    <location>
        <begin position="295"/>
        <end position="299"/>
    </location>
</feature>
<feature type="binding site" evidence="1">
    <location>
        <position position="298"/>
    </location>
    <ligand>
        <name>ATP</name>
        <dbReference type="ChEBI" id="CHEBI:30616"/>
    </ligand>
</feature>
<comment type="function">
    <text evidence="1">Is required not only for elongation of protein synthesis but also for the initiation of all mRNA translation through initiator tRNA(fMet) aminoacylation.</text>
</comment>
<comment type="catalytic activity">
    <reaction>
        <text>tRNA(Met) + L-methionine + ATP = L-methionyl-tRNA(Met) + AMP + diphosphate</text>
        <dbReference type="Rhea" id="RHEA:13481"/>
        <dbReference type="Rhea" id="RHEA-COMP:9667"/>
        <dbReference type="Rhea" id="RHEA-COMP:9698"/>
        <dbReference type="ChEBI" id="CHEBI:30616"/>
        <dbReference type="ChEBI" id="CHEBI:33019"/>
        <dbReference type="ChEBI" id="CHEBI:57844"/>
        <dbReference type="ChEBI" id="CHEBI:78442"/>
        <dbReference type="ChEBI" id="CHEBI:78530"/>
        <dbReference type="ChEBI" id="CHEBI:456215"/>
        <dbReference type="EC" id="6.1.1.10"/>
    </reaction>
</comment>
<comment type="subunit">
    <text evidence="1">Monomer.</text>
</comment>
<comment type="subcellular location">
    <subcellularLocation>
        <location evidence="1">Cytoplasm</location>
    </subcellularLocation>
</comment>
<comment type="similarity">
    <text evidence="2">Belongs to the class-I aminoacyl-tRNA synthetase family. MetG type 2B subfamily.</text>
</comment>
<dbReference type="EC" id="6.1.1.10"/>
<dbReference type="EMBL" id="AJ235272">
    <property type="protein sequence ID" value="CAA15120.1"/>
    <property type="molecule type" value="Genomic_DNA"/>
</dbReference>
<dbReference type="PIR" id="F71674">
    <property type="entry name" value="F71674"/>
</dbReference>
<dbReference type="RefSeq" id="NP_221044.1">
    <property type="nucleotide sequence ID" value="NC_000963.1"/>
</dbReference>
<dbReference type="RefSeq" id="WP_004596363.1">
    <property type="nucleotide sequence ID" value="NC_000963.1"/>
</dbReference>
<dbReference type="SMR" id="Q9ZCP0"/>
<dbReference type="STRING" id="272947.gene:17555760"/>
<dbReference type="EnsemblBacteria" id="CAA15120">
    <property type="protein sequence ID" value="CAA15120"/>
    <property type="gene ID" value="CAA15120"/>
</dbReference>
<dbReference type="GeneID" id="57569808"/>
<dbReference type="KEGG" id="rpr:RP683"/>
<dbReference type="PATRIC" id="fig|272947.5.peg.705"/>
<dbReference type="eggNOG" id="COG0143">
    <property type="taxonomic scope" value="Bacteria"/>
</dbReference>
<dbReference type="HOGENOM" id="CLU_009710_9_2_5"/>
<dbReference type="OrthoDB" id="9810191at2"/>
<dbReference type="Proteomes" id="UP000002480">
    <property type="component" value="Chromosome"/>
</dbReference>
<dbReference type="GO" id="GO:0005737">
    <property type="term" value="C:cytoplasm"/>
    <property type="evidence" value="ECO:0007669"/>
    <property type="project" value="UniProtKB-SubCell"/>
</dbReference>
<dbReference type="GO" id="GO:0005524">
    <property type="term" value="F:ATP binding"/>
    <property type="evidence" value="ECO:0007669"/>
    <property type="project" value="UniProtKB-UniRule"/>
</dbReference>
<dbReference type="GO" id="GO:0004825">
    <property type="term" value="F:methionine-tRNA ligase activity"/>
    <property type="evidence" value="ECO:0007669"/>
    <property type="project" value="UniProtKB-UniRule"/>
</dbReference>
<dbReference type="GO" id="GO:0006431">
    <property type="term" value="P:methionyl-tRNA aminoacylation"/>
    <property type="evidence" value="ECO:0007669"/>
    <property type="project" value="UniProtKB-UniRule"/>
</dbReference>
<dbReference type="CDD" id="cd07957">
    <property type="entry name" value="Anticodon_Ia_Met"/>
    <property type="match status" value="1"/>
</dbReference>
<dbReference type="CDD" id="cd00814">
    <property type="entry name" value="MetRS_core"/>
    <property type="match status" value="1"/>
</dbReference>
<dbReference type="FunFam" id="2.170.220.10:FF:000001">
    <property type="entry name" value="methionine--tRNA ligase, mitochondrial"/>
    <property type="match status" value="1"/>
</dbReference>
<dbReference type="Gene3D" id="2.170.220.10">
    <property type="match status" value="1"/>
</dbReference>
<dbReference type="Gene3D" id="3.40.50.620">
    <property type="entry name" value="HUPs"/>
    <property type="match status" value="1"/>
</dbReference>
<dbReference type="Gene3D" id="1.10.730.10">
    <property type="entry name" value="Isoleucyl-tRNA Synthetase, Domain 1"/>
    <property type="match status" value="1"/>
</dbReference>
<dbReference type="HAMAP" id="MF_01228">
    <property type="entry name" value="Met_tRNA_synth_type2"/>
    <property type="match status" value="1"/>
</dbReference>
<dbReference type="InterPro" id="IPR041872">
    <property type="entry name" value="Anticodon_Met"/>
</dbReference>
<dbReference type="InterPro" id="IPR014758">
    <property type="entry name" value="Met-tRNA_synth"/>
</dbReference>
<dbReference type="InterPro" id="IPR023457">
    <property type="entry name" value="Met-tRNA_synth_2"/>
</dbReference>
<dbReference type="InterPro" id="IPR015413">
    <property type="entry name" value="Methionyl/Leucyl_tRNA_Synth"/>
</dbReference>
<dbReference type="InterPro" id="IPR033911">
    <property type="entry name" value="MetRS_core"/>
</dbReference>
<dbReference type="InterPro" id="IPR014729">
    <property type="entry name" value="Rossmann-like_a/b/a_fold"/>
</dbReference>
<dbReference type="InterPro" id="IPR009080">
    <property type="entry name" value="tRNAsynth_Ia_anticodon-bd"/>
</dbReference>
<dbReference type="NCBIfam" id="TIGR00398">
    <property type="entry name" value="metG"/>
    <property type="match status" value="1"/>
</dbReference>
<dbReference type="NCBIfam" id="NF008900">
    <property type="entry name" value="PRK12267.1"/>
    <property type="match status" value="1"/>
</dbReference>
<dbReference type="PANTHER" id="PTHR43326:SF1">
    <property type="entry name" value="METHIONINE--TRNA LIGASE, MITOCHONDRIAL"/>
    <property type="match status" value="1"/>
</dbReference>
<dbReference type="PANTHER" id="PTHR43326">
    <property type="entry name" value="METHIONYL-TRNA SYNTHETASE"/>
    <property type="match status" value="1"/>
</dbReference>
<dbReference type="Pfam" id="PF19303">
    <property type="entry name" value="Anticodon_3"/>
    <property type="match status" value="1"/>
</dbReference>
<dbReference type="Pfam" id="PF09334">
    <property type="entry name" value="tRNA-synt_1g"/>
    <property type="match status" value="2"/>
</dbReference>
<dbReference type="PRINTS" id="PR01041">
    <property type="entry name" value="TRNASYNTHMET"/>
</dbReference>
<dbReference type="SUPFAM" id="SSF47323">
    <property type="entry name" value="Anticodon-binding domain of a subclass of class I aminoacyl-tRNA synthetases"/>
    <property type="match status" value="1"/>
</dbReference>
<dbReference type="SUPFAM" id="SSF52374">
    <property type="entry name" value="Nucleotidylyl transferase"/>
    <property type="match status" value="1"/>
</dbReference>
<accession>Q9ZCP0</accession>
<keyword id="KW-0030">Aminoacyl-tRNA synthetase</keyword>
<keyword id="KW-0067">ATP-binding</keyword>
<keyword id="KW-0963">Cytoplasm</keyword>
<keyword id="KW-0436">Ligase</keyword>
<keyword id="KW-0547">Nucleotide-binding</keyword>
<keyword id="KW-0648">Protein biosynthesis</keyword>
<keyword id="KW-1185">Reference proteome</keyword>